<feature type="chain" id="PRO_0000409051" description="UDP-glycosyltransferase 71B7">
    <location>
        <begin position="1"/>
        <end position="495"/>
    </location>
</feature>
<feature type="binding site" evidence="1">
    <location>
        <position position="284"/>
    </location>
    <ligand>
        <name>UDP-alpha-D-glucose</name>
        <dbReference type="ChEBI" id="CHEBI:58885"/>
    </ligand>
</feature>
<feature type="binding site" evidence="1">
    <location>
        <begin position="351"/>
        <end position="353"/>
    </location>
    <ligand>
        <name>UDP-alpha-D-glucose</name>
        <dbReference type="ChEBI" id="CHEBI:58885"/>
    </ligand>
</feature>
<feature type="binding site" evidence="1">
    <location>
        <begin position="368"/>
        <end position="376"/>
    </location>
    <ligand>
        <name>UDP-alpha-D-glucose</name>
        <dbReference type="ChEBI" id="CHEBI:58885"/>
    </ligand>
</feature>
<feature type="binding site" evidence="1">
    <location>
        <begin position="390"/>
        <end position="393"/>
    </location>
    <ligand>
        <name>UDP-alpha-D-glucose</name>
        <dbReference type="ChEBI" id="CHEBI:58885"/>
    </ligand>
</feature>
<comment type="similarity">
    <text evidence="2">Belongs to the UDP-glycosyltransferase family.</text>
</comment>
<comment type="sequence caution" evidence="2">
    <conflict type="erroneous gene model prediction">
        <sequence resource="EMBL-CDS" id="BAB02841"/>
    </conflict>
</comment>
<protein>
    <recommendedName>
        <fullName>UDP-glycosyltransferase 71B7</fullName>
        <ecNumber>2.4.1.-</ecNumber>
    </recommendedName>
</protein>
<proteinExistence type="evidence at transcript level"/>
<reference key="1">
    <citation type="journal article" date="2000" name="DNA Res.">
        <title>Structural analysis of Arabidopsis thaliana chromosome 3. I. Sequence features of the regions of 4,504,864 bp covered by sixty P1 and TAC clones.</title>
        <authorList>
            <person name="Sato S."/>
            <person name="Nakamura Y."/>
            <person name="Kaneko T."/>
            <person name="Katoh T."/>
            <person name="Asamizu E."/>
            <person name="Tabata S."/>
        </authorList>
    </citation>
    <scope>NUCLEOTIDE SEQUENCE [LARGE SCALE GENOMIC DNA]</scope>
    <source>
        <strain>cv. Columbia</strain>
    </source>
</reference>
<reference key="2">
    <citation type="journal article" date="2017" name="Plant J.">
        <title>Araport11: a complete reannotation of the Arabidopsis thaliana reference genome.</title>
        <authorList>
            <person name="Cheng C.Y."/>
            <person name="Krishnakumar V."/>
            <person name="Chan A.P."/>
            <person name="Thibaud-Nissen F."/>
            <person name="Schobel S."/>
            <person name="Town C.D."/>
        </authorList>
    </citation>
    <scope>GENOME REANNOTATION</scope>
    <source>
        <strain>cv. Columbia</strain>
    </source>
</reference>
<reference key="3">
    <citation type="journal article" date="2001" name="J. Biol. Chem.">
        <title>Phylogenetic analysis of the UDP-glycosyltransferase multigene family of Arabidopsis thaliana.</title>
        <authorList>
            <person name="Li Y."/>
            <person name="Baldauf S."/>
            <person name="Lim E.K."/>
            <person name="Bowles D.J."/>
        </authorList>
    </citation>
    <scope>GENE FAMILY</scope>
</reference>
<name>U71B7_ARATH</name>
<keyword id="KW-0328">Glycosyltransferase</keyword>
<keyword id="KW-1185">Reference proteome</keyword>
<keyword id="KW-0808">Transferase</keyword>
<accession>Q9LSY5</accession>
<organism>
    <name type="scientific">Arabidopsis thaliana</name>
    <name type="common">Mouse-ear cress</name>
    <dbReference type="NCBI Taxonomy" id="3702"/>
    <lineage>
        <taxon>Eukaryota</taxon>
        <taxon>Viridiplantae</taxon>
        <taxon>Streptophyta</taxon>
        <taxon>Embryophyta</taxon>
        <taxon>Tracheophyta</taxon>
        <taxon>Spermatophyta</taxon>
        <taxon>Magnoliopsida</taxon>
        <taxon>eudicotyledons</taxon>
        <taxon>Gunneridae</taxon>
        <taxon>Pentapetalae</taxon>
        <taxon>rosids</taxon>
        <taxon>malvids</taxon>
        <taxon>Brassicales</taxon>
        <taxon>Brassicaceae</taxon>
        <taxon>Camelineae</taxon>
        <taxon>Arabidopsis</taxon>
    </lineage>
</organism>
<evidence type="ECO:0000250" key="1"/>
<evidence type="ECO:0000305" key="2"/>
<dbReference type="EC" id="2.4.1.-"/>
<dbReference type="EMBL" id="AB025634">
    <property type="protein sequence ID" value="BAB02841.1"/>
    <property type="status" value="ALT_SEQ"/>
    <property type="molecule type" value="Genomic_DNA"/>
</dbReference>
<dbReference type="EMBL" id="CP002686">
    <property type="protein sequence ID" value="AEE76552.1"/>
    <property type="molecule type" value="Genomic_DNA"/>
</dbReference>
<dbReference type="RefSeq" id="NP_188816.1">
    <property type="nucleotide sequence ID" value="NM_113074.2"/>
</dbReference>
<dbReference type="SMR" id="Q9LSY5"/>
<dbReference type="FunCoup" id="Q9LSY5">
    <property type="interactions" value="301"/>
</dbReference>
<dbReference type="STRING" id="3702.Q9LSY5"/>
<dbReference type="CAZy" id="GT1">
    <property type="family name" value="Glycosyltransferase Family 1"/>
</dbReference>
<dbReference type="PaxDb" id="3702-AT3G21790.1"/>
<dbReference type="ProteomicsDB" id="228561"/>
<dbReference type="EnsemblPlants" id="AT3G21790.1">
    <property type="protein sequence ID" value="AT3G21790.1"/>
    <property type="gene ID" value="AT3G21790"/>
</dbReference>
<dbReference type="GeneID" id="821733"/>
<dbReference type="Gramene" id="AT3G21790.1">
    <property type="protein sequence ID" value="AT3G21790.1"/>
    <property type="gene ID" value="AT3G21790"/>
</dbReference>
<dbReference type="KEGG" id="ath:AT3G21790"/>
<dbReference type="Araport" id="AT3G21790"/>
<dbReference type="TAIR" id="AT3G21790"/>
<dbReference type="eggNOG" id="KOG1192">
    <property type="taxonomic scope" value="Eukaryota"/>
</dbReference>
<dbReference type="HOGENOM" id="CLU_001724_3_2_1"/>
<dbReference type="InParanoid" id="Q9LSY5"/>
<dbReference type="OMA" id="PPGEYTN"/>
<dbReference type="OrthoDB" id="5835829at2759"/>
<dbReference type="BioCyc" id="ARA:AT3G21790-MONOMER"/>
<dbReference type="PRO" id="PR:Q9LSY5"/>
<dbReference type="Proteomes" id="UP000006548">
    <property type="component" value="Chromosome 3"/>
</dbReference>
<dbReference type="ExpressionAtlas" id="Q9LSY5">
    <property type="expression patterns" value="baseline and differential"/>
</dbReference>
<dbReference type="GO" id="GO:0005829">
    <property type="term" value="C:cytosol"/>
    <property type="evidence" value="ECO:0007005"/>
    <property type="project" value="TAIR"/>
</dbReference>
<dbReference type="GO" id="GO:0035251">
    <property type="term" value="F:UDP-glucosyltransferase activity"/>
    <property type="evidence" value="ECO:0007669"/>
    <property type="project" value="InterPro"/>
</dbReference>
<dbReference type="CDD" id="cd03784">
    <property type="entry name" value="GT1_Gtf-like"/>
    <property type="match status" value="1"/>
</dbReference>
<dbReference type="FunFam" id="3.40.50.2000:FF:000056">
    <property type="entry name" value="Glycosyltransferase"/>
    <property type="match status" value="1"/>
</dbReference>
<dbReference type="FunFam" id="3.40.50.2000:FF:000080">
    <property type="entry name" value="Glycosyltransferase"/>
    <property type="match status" value="1"/>
</dbReference>
<dbReference type="Gene3D" id="3.40.50.2000">
    <property type="entry name" value="Glycogen Phosphorylase B"/>
    <property type="match status" value="2"/>
</dbReference>
<dbReference type="InterPro" id="IPR050481">
    <property type="entry name" value="UDP-glycosyltransf_plant"/>
</dbReference>
<dbReference type="InterPro" id="IPR002213">
    <property type="entry name" value="UDP_glucos_trans"/>
</dbReference>
<dbReference type="InterPro" id="IPR035595">
    <property type="entry name" value="UDP_glycos_trans_CS"/>
</dbReference>
<dbReference type="PANTHER" id="PTHR48048">
    <property type="entry name" value="GLYCOSYLTRANSFERASE"/>
    <property type="match status" value="1"/>
</dbReference>
<dbReference type="PANTHER" id="PTHR48048:SF45">
    <property type="entry name" value="GLYCOSYLTRANSFERASE"/>
    <property type="match status" value="1"/>
</dbReference>
<dbReference type="Pfam" id="PF00201">
    <property type="entry name" value="UDPGT"/>
    <property type="match status" value="1"/>
</dbReference>
<dbReference type="SUPFAM" id="SSF53756">
    <property type="entry name" value="UDP-Glycosyltransferase/glycogen phosphorylase"/>
    <property type="match status" value="1"/>
</dbReference>
<dbReference type="PROSITE" id="PS00375">
    <property type="entry name" value="UDPGT"/>
    <property type="match status" value="1"/>
</dbReference>
<gene>
    <name type="primary">UGT71B7</name>
    <name type="ordered locus">At3g21790</name>
    <name type="ORF">MSD21.10</name>
    <name type="ORF">MSD21.15</name>
</gene>
<sequence>MKFELVFIPYPGIGHLRSTVEMAKLLVDRETRLSISVIILPFISEGEVGASDYIAALSASSNNRLRYEVISAVDQPTIEMTTIEIHMKNQEPKVRSTVAKLLEDYSSKPDSPKIAGFVLDMFCTSMVDVANEFGFPSYMFYTSSAGILSVTYHVQMLCDENKYDVSENDYADSEAVLNFPSLSRPYPVKCLPHALAANMWLPVFVNQARKFREMKGILVNTVAELEPYVLKFLSSSDTPPVYPVGPLLHLENQRDDSKDEKRLEIIRWLDQQPPSSVVFLCFGSMGGFGEEQVREIAIALERSGHRFLWSLRRASPNIFKELPGEFTNLEEVLPEGFFDRTKDIGKVIGWAPQVAVLANPAIGGFVTHCGWNSTLESLWFGVPTAAWPLYAEQKFNAFLMVEELGLAVEIRKYWRGEHLAGLPTATVTAEEIEKAIMCLMEQDSDVRKRVKDMSEKCHVALMDGGSSRTALQKFIEEVAKNIVSLDKEFEHVALK</sequence>